<evidence type="ECO:0000255" key="1">
    <source>
        <dbReference type="HAMAP-Rule" id="MF_01603"/>
    </source>
</evidence>
<name>HLDE_RHOPA</name>
<feature type="chain" id="PRO_0000080123" description="Bifunctional protein HldE">
    <location>
        <begin position="1"/>
        <end position="490"/>
    </location>
</feature>
<feature type="region of interest" description="Ribokinase">
    <location>
        <begin position="1"/>
        <end position="330"/>
    </location>
</feature>
<feature type="region of interest" description="Cytidylyltransferase">
    <location>
        <begin position="358"/>
        <end position="490"/>
    </location>
</feature>
<feature type="active site" evidence="1">
    <location>
        <position position="275"/>
    </location>
</feature>
<feature type="binding site" evidence="1">
    <location>
        <begin position="205"/>
        <end position="208"/>
    </location>
    <ligand>
        <name>ATP</name>
        <dbReference type="ChEBI" id="CHEBI:30616"/>
    </ligand>
</feature>
<keyword id="KW-0067">ATP-binding</keyword>
<keyword id="KW-0119">Carbohydrate metabolism</keyword>
<keyword id="KW-0418">Kinase</keyword>
<keyword id="KW-0511">Multifunctional enzyme</keyword>
<keyword id="KW-0547">Nucleotide-binding</keyword>
<keyword id="KW-0548">Nucleotidyltransferase</keyword>
<keyword id="KW-0808">Transferase</keyword>
<organism>
    <name type="scientific">Rhodopseudomonas palustris (strain ATCC BAA-98 / CGA009)</name>
    <dbReference type="NCBI Taxonomy" id="258594"/>
    <lineage>
        <taxon>Bacteria</taxon>
        <taxon>Pseudomonadati</taxon>
        <taxon>Pseudomonadota</taxon>
        <taxon>Alphaproteobacteria</taxon>
        <taxon>Hyphomicrobiales</taxon>
        <taxon>Nitrobacteraceae</taxon>
        <taxon>Rhodopseudomonas</taxon>
    </lineage>
</organism>
<dbReference type="EC" id="2.7.1.167" evidence="1"/>
<dbReference type="EC" id="2.7.7.70" evidence="1"/>
<dbReference type="EMBL" id="BX572605">
    <property type="protein sequence ID" value="CAE29425.1"/>
    <property type="molecule type" value="Genomic_DNA"/>
</dbReference>
<dbReference type="RefSeq" id="WP_011159520.1">
    <property type="nucleotide sequence ID" value="NZ_CP116810.1"/>
</dbReference>
<dbReference type="SMR" id="Q6N2R5"/>
<dbReference type="STRING" id="258594.RPA3984"/>
<dbReference type="GeneID" id="66895101"/>
<dbReference type="eggNOG" id="COG0615">
    <property type="taxonomic scope" value="Bacteria"/>
</dbReference>
<dbReference type="eggNOG" id="COG2870">
    <property type="taxonomic scope" value="Bacteria"/>
</dbReference>
<dbReference type="HOGENOM" id="CLU_021150_2_1_5"/>
<dbReference type="PhylomeDB" id="Q6N2R5"/>
<dbReference type="UniPathway" id="UPA00356">
    <property type="reaction ID" value="UER00437"/>
</dbReference>
<dbReference type="UniPathway" id="UPA00356">
    <property type="reaction ID" value="UER00439"/>
</dbReference>
<dbReference type="GO" id="GO:0005829">
    <property type="term" value="C:cytosol"/>
    <property type="evidence" value="ECO:0007669"/>
    <property type="project" value="TreeGrafter"/>
</dbReference>
<dbReference type="GO" id="GO:0005524">
    <property type="term" value="F:ATP binding"/>
    <property type="evidence" value="ECO:0007669"/>
    <property type="project" value="UniProtKB-UniRule"/>
</dbReference>
<dbReference type="GO" id="GO:0033785">
    <property type="term" value="F:heptose 7-phosphate kinase activity"/>
    <property type="evidence" value="ECO:0007669"/>
    <property type="project" value="UniProtKB-UniRule"/>
</dbReference>
<dbReference type="GO" id="GO:0033786">
    <property type="term" value="F:heptose-1-phosphate adenylyltransferase activity"/>
    <property type="evidence" value="ECO:0007669"/>
    <property type="project" value="UniProtKB-UniRule"/>
</dbReference>
<dbReference type="GO" id="GO:0016773">
    <property type="term" value="F:phosphotransferase activity, alcohol group as acceptor"/>
    <property type="evidence" value="ECO:0007669"/>
    <property type="project" value="InterPro"/>
</dbReference>
<dbReference type="GO" id="GO:0097171">
    <property type="term" value="P:ADP-L-glycero-beta-D-manno-heptose biosynthetic process"/>
    <property type="evidence" value="ECO:0007669"/>
    <property type="project" value="UniProtKB-UniPathway"/>
</dbReference>
<dbReference type="CDD" id="cd01172">
    <property type="entry name" value="RfaE_like"/>
    <property type="match status" value="1"/>
</dbReference>
<dbReference type="Gene3D" id="3.40.1190.20">
    <property type="match status" value="1"/>
</dbReference>
<dbReference type="Gene3D" id="3.40.50.620">
    <property type="entry name" value="HUPs"/>
    <property type="match status" value="1"/>
</dbReference>
<dbReference type="HAMAP" id="MF_01603">
    <property type="entry name" value="HldE"/>
    <property type="match status" value="1"/>
</dbReference>
<dbReference type="InterPro" id="IPR023030">
    <property type="entry name" value="Bifunc_HldE"/>
</dbReference>
<dbReference type="InterPro" id="IPR002173">
    <property type="entry name" value="Carboh/pur_kinase_PfkB_CS"/>
</dbReference>
<dbReference type="InterPro" id="IPR004821">
    <property type="entry name" value="Cyt_trans-like"/>
</dbReference>
<dbReference type="InterPro" id="IPR011611">
    <property type="entry name" value="PfkB_dom"/>
</dbReference>
<dbReference type="InterPro" id="IPR011913">
    <property type="entry name" value="RfaE_dom_I"/>
</dbReference>
<dbReference type="InterPro" id="IPR011914">
    <property type="entry name" value="RfaE_dom_II"/>
</dbReference>
<dbReference type="InterPro" id="IPR029056">
    <property type="entry name" value="Ribokinase-like"/>
</dbReference>
<dbReference type="InterPro" id="IPR014729">
    <property type="entry name" value="Rossmann-like_a/b/a_fold"/>
</dbReference>
<dbReference type="NCBIfam" id="TIGR00125">
    <property type="entry name" value="cyt_tran_rel"/>
    <property type="match status" value="1"/>
</dbReference>
<dbReference type="NCBIfam" id="TIGR02198">
    <property type="entry name" value="rfaE_dom_I"/>
    <property type="match status" value="1"/>
</dbReference>
<dbReference type="NCBIfam" id="TIGR02199">
    <property type="entry name" value="rfaE_dom_II"/>
    <property type="match status" value="1"/>
</dbReference>
<dbReference type="PANTHER" id="PTHR46969">
    <property type="entry name" value="BIFUNCTIONAL PROTEIN HLDE"/>
    <property type="match status" value="1"/>
</dbReference>
<dbReference type="PANTHER" id="PTHR46969:SF1">
    <property type="entry name" value="BIFUNCTIONAL PROTEIN HLDE"/>
    <property type="match status" value="1"/>
</dbReference>
<dbReference type="Pfam" id="PF01467">
    <property type="entry name" value="CTP_transf_like"/>
    <property type="match status" value="1"/>
</dbReference>
<dbReference type="Pfam" id="PF00294">
    <property type="entry name" value="PfkB"/>
    <property type="match status" value="1"/>
</dbReference>
<dbReference type="SUPFAM" id="SSF52374">
    <property type="entry name" value="Nucleotidylyl transferase"/>
    <property type="match status" value="1"/>
</dbReference>
<dbReference type="SUPFAM" id="SSF53613">
    <property type="entry name" value="Ribokinase-like"/>
    <property type="match status" value="1"/>
</dbReference>
<dbReference type="PROSITE" id="PS00583">
    <property type="entry name" value="PFKB_KINASES_1"/>
    <property type="match status" value="1"/>
</dbReference>
<gene>
    <name evidence="1" type="primary">hldE</name>
    <name type="synonym">rfaE</name>
    <name type="ordered locus">RPA3984</name>
</gene>
<reference key="1">
    <citation type="journal article" date="2004" name="Nat. Biotechnol.">
        <title>Complete genome sequence of the metabolically versatile photosynthetic bacterium Rhodopseudomonas palustris.</title>
        <authorList>
            <person name="Larimer F.W."/>
            <person name="Chain P."/>
            <person name="Hauser L."/>
            <person name="Lamerdin J.E."/>
            <person name="Malfatti S."/>
            <person name="Do L."/>
            <person name="Land M.L."/>
            <person name="Pelletier D.A."/>
            <person name="Beatty J.T."/>
            <person name="Lang A.S."/>
            <person name="Tabita F.R."/>
            <person name="Gibson J.L."/>
            <person name="Hanson T.E."/>
            <person name="Bobst C."/>
            <person name="Torres y Torres J.L."/>
            <person name="Peres C."/>
            <person name="Harrison F.H."/>
            <person name="Gibson J."/>
            <person name="Harwood C.S."/>
        </authorList>
    </citation>
    <scope>NUCLEOTIDE SEQUENCE [LARGE SCALE GENOMIC DNA]</scope>
    <source>
        <strain>ATCC BAA-98 / CGA009</strain>
    </source>
</reference>
<sequence length="490" mass="52131">MFSFDALLQAIARQTVLCVGDLMLDEFVYGEVSRISPEAPAPVIAVQRSETNIGGAGNVARNIAAIGARCIFVGLIGDDATGRFLESELGSESRIEPVLVCDGSRPTTRKVRFVSEHFSTHMLRADWETASPAAADIEQRLLDAILPQLARADIVLLSDYAKGVLTARVIRDTIDAAKKLGKRVIVDPKSANFAIYRGATLLTPNRKEFTAATRSAAATDDEIAAAAQDAMALAECEAMLVTKSEHGMTLVPRGGEPIHVPALPVKVRDVSGAGDTVAAVLAVVLASGANWATAMRAASAAAAVAVSKNGTAVVTPAELRRRILPHASLAAEEKIIGSDEELDERLKQWRREGLRVGFTNGCFDILHPGHVKVLTAARGACDRLIVGLNSDASVRRLKGESRPVQHERARAEVLAALEAVDLVAIFEEDTPLRLITRIEPSVLVKGGDYTREQVVGHEIVAAKGGDVLLVDVLPGFSTTSLVARAREGQS</sequence>
<comment type="function">
    <text evidence="1">Catalyzes the phosphorylation of D-glycero-D-manno-heptose 7-phosphate at the C-1 position to selectively form D-glycero-beta-D-manno-heptose-1,7-bisphosphate.</text>
</comment>
<comment type="function">
    <text evidence="1">Catalyzes the ADP transfer from ATP to D-glycero-beta-D-manno-heptose 1-phosphate, yielding ADP-D-glycero-beta-D-manno-heptose.</text>
</comment>
<comment type="catalytic activity">
    <reaction evidence="1">
        <text>D-glycero-beta-D-manno-heptose 7-phosphate + ATP = D-glycero-beta-D-manno-heptose 1,7-bisphosphate + ADP + H(+)</text>
        <dbReference type="Rhea" id="RHEA:27473"/>
        <dbReference type="ChEBI" id="CHEBI:15378"/>
        <dbReference type="ChEBI" id="CHEBI:30616"/>
        <dbReference type="ChEBI" id="CHEBI:60204"/>
        <dbReference type="ChEBI" id="CHEBI:60208"/>
        <dbReference type="ChEBI" id="CHEBI:456216"/>
        <dbReference type="EC" id="2.7.1.167"/>
    </reaction>
</comment>
<comment type="catalytic activity">
    <reaction evidence="1">
        <text>D-glycero-beta-D-manno-heptose 1-phosphate + ATP + H(+) = ADP-D-glycero-beta-D-manno-heptose + diphosphate</text>
        <dbReference type="Rhea" id="RHEA:27465"/>
        <dbReference type="ChEBI" id="CHEBI:15378"/>
        <dbReference type="ChEBI" id="CHEBI:30616"/>
        <dbReference type="ChEBI" id="CHEBI:33019"/>
        <dbReference type="ChEBI" id="CHEBI:59967"/>
        <dbReference type="ChEBI" id="CHEBI:61593"/>
        <dbReference type="EC" id="2.7.7.70"/>
    </reaction>
</comment>
<comment type="pathway">
    <text evidence="1">Nucleotide-sugar biosynthesis; ADP-L-glycero-beta-D-manno-heptose biosynthesis; ADP-L-glycero-beta-D-manno-heptose from D-glycero-beta-D-manno-heptose 7-phosphate: step 1/4.</text>
</comment>
<comment type="pathway">
    <text evidence="1">Nucleotide-sugar biosynthesis; ADP-L-glycero-beta-D-manno-heptose biosynthesis; ADP-L-glycero-beta-D-manno-heptose from D-glycero-beta-D-manno-heptose 7-phosphate: step 3/4.</text>
</comment>
<comment type="subunit">
    <text evidence="1">Homodimer.</text>
</comment>
<comment type="similarity">
    <text evidence="1">In the N-terminal section; belongs to the carbohydrate kinase PfkB family.</text>
</comment>
<comment type="similarity">
    <text evidence="1">In the C-terminal section; belongs to the cytidylyltransferase family.</text>
</comment>
<accession>Q6N2R5</accession>
<proteinExistence type="inferred from homology"/>
<protein>
    <recommendedName>
        <fullName evidence="1">Bifunctional protein HldE</fullName>
    </recommendedName>
    <domain>
        <recommendedName>
            <fullName evidence="1">D-beta-D-heptose 7-phosphate kinase</fullName>
            <ecNumber evidence="1">2.7.1.167</ecNumber>
        </recommendedName>
        <alternativeName>
            <fullName evidence="1">D-beta-D-heptose 7-phosphotransferase</fullName>
        </alternativeName>
        <alternativeName>
            <fullName evidence="1">D-glycero-beta-D-manno-heptose-7-phosphate kinase</fullName>
        </alternativeName>
    </domain>
    <domain>
        <recommendedName>
            <fullName evidence="1">D-beta-D-heptose 1-phosphate adenylyltransferase</fullName>
            <ecNumber evidence="1">2.7.7.70</ecNumber>
        </recommendedName>
        <alternativeName>
            <fullName evidence="1">D-glycero-beta-D-manno-heptose 1-phosphate adenylyltransferase</fullName>
        </alternativeName>
    </domain>
</protein>